<accession>A6M249</accession>
<reference key="1">
    <citation type="submission" date="2007-06" db="EMBL/GenBank/DDBJ databases">
        <title>Complete sequence of Clostridium beijerinckii NCIMB 8052.</title>
        <authorList>
            <consortium name="US DOE Joint Genome Institute"/>
            <person name="Copeland A."/>
            <person name="Lucas S."/>
            <person name="Lapidus A."/>
            <person name="Barry K."/>
            <person name="Detter J.C."/>
            <person name="Glavina del Rio T."/>
            <person name="Hammon N."/>
            <person name="Israni S."/>
            <person name="Dalin E."/>
            <person name="Tice H."/>
            <person name="Pitluck S."/>
            <person name="Sims D."/>
            <person name="Brettin T."/>
            <person name="Bruce D."/>
            <person name="Tapia R."/>
            <person name="Brainard J."/>
            <person name="Schmutz J."/>
            <person name="Larimer F."/>
            <person name="Land M."/>
            <person name="Hauser L."/>
            <person name="Kyrpides N."/>
            <person name="Mikhailova N."/>
            <person name="Bennet G."/>
            <person name="Cann I."/>
            <person name="Chen J.-S."/>
            <person name="Contreras A.L."/>
            <person name="Jones D."/>
            <person name="Kashket E."/>
            <person name="Mitchell W."/>
            <person name="Stoddard S."/>
            <person name="Schwarz W."/>
            <person name="Qureshi N."/>
            <person name="Young M."/>
            <person name="Shi Z."/>
            <person name="Ezeji T."/>
            <person name="White B."/>
            <person name="Blaschek H."/>
            <person name="Richardson P."/>
        </authorList>
    </citation>
    <scope>NUCLEOTIDE SEQUENCE [LARGE SCALE GENOMIC DNA]</scope>
    <source>
        <strain>ATCC 51743 / NCIMB 8052</strain>
    </source>
</reference>
<dbReference type="EC" id="4.2.1.10" evidence="1"/>
<dbReference type="EMBL" id="CP000721">
    <property type="protein sequence ID" value="ABR36679.1"/>
    <property type="molecule type" value="Genomic_DNA"/>
</dbReference>
<dbReference type="RefSeq" id="WP_012060726.1">
    <property type="nucleotide sequence ID" value="NC_009617.1"/>
</dbReference>
<dbReference type="SMR" id="A6M249"/>
<dbReference type="GeneID" id="66347433"/>
<dbReference type="KEGG" id="cbe:Cbei_4570"/>
<dbReference type="eggNOG" id="COG0757">
    <property type="taxonomic scope" value="Bacteria"/>
</dbReference>
<dbReference type="HOGENOM" id="CLU_090968_3_0_9"/>
<dbReference type="UniPathway" id="UPA00053">
    <property type="reaction ID" value="UER00086"/>
</dbReference>
<dbReference type="Proteomes" id="UP000000565">
    <property type="component" value="Chromosome"/>
</dbReference>
<dbReference type="GO" id="GO:0003855">
    <property type="term" value="F:3-dehydroquinate dehydratase activity"/>
    <property type="evidence" value="ECO:0007669"/>
    <property type="project" value="UniProtKB-UniRule"/>
</dbReference>
<dbReference type="GO" id="GO:0008652">
    <property type="term" value="P:amino acid biosynthetic process"/>
    <property type="evidence" value="ECO:0007669"/>
    <property type="project" value="UniProtKB-KW"/>
</dbReference>
<dbReference type="GO" id="GO:0009073">
    <property type="term" value="P:aromatic amino acid family biosynthetic process"/>
    <property type="evidence" value="ECO:0007669"/>
    <property type="project" value="UniProtKB-KW"/>
</dbReference>
<dbReference type="GO" id="GO:0009423">
    <property type="term" value="P:chorismate biosynthetic process"/>
    <property type="evidence" value="ECO:0007669"/>
    <property type="project" value="UniProtKB-UniRule"/>
</dbReference>
<dbReference type="GO" id="GO:0019631">
    <property type="term" value="P:quinate catabolic process"/>
    <property type="evidence" value="ECO:0007669"/>
    <property type="project" value="TreeGrafter"/>
</dbReference>
<dbReference type="CDD" id="cd00466">
    <property type="entry name" value="DHQase_II"/>
    <property type="match status" value="1"/>
</dbReference>
<dbReference type="Gene3D" id="3.40.50.9100">
    <property type="entry name" value="Dehydroquinase, class II"/>
    <property type="match status" value="1"/>
</dbReference>
<dbReference type="HAMAP" id="MF_00169">
    <property type="entry name" value="AroQ"/>
    <property type="match status" value="1"/>
</dbReference>
<dbReference type="InterPro" id="IPR001874">
    <property type="entry name" value="DHquinase_II"/>
</dbReference>
<dbReference type="InterPro" id="IPR036441">
    <property type="entry name" value="DHquinase_II_sf"/>
</dbReference>
<dbReference type="NCBIfam" id="TIGR01088">
    <property type="entry name" value="aroQ"/>
    <property type="match status" value="1"/>
</dbReference>
<dbReference type="NCBIfam" id="NF003805">
    <property type="entry name" value="PRK05395.1-2"/>
    <property type="match status" value="1"/>
</dbReference>
<dbReference type="NCBIfam" id="NF003806">
    <property type="entry name" value="PRK05395.1-3"/>
    <property type="match status" value="1"/>
</dbReference>
<dbReference type="NCBIfam" id="NF003807">
    <property type="entry name" value="PRK05395.1-4"/>
    <property type="match status" value="1"/>
</dbReference>
<dbReference type="PANTHER" id="PTHR21272">
    <property type="entry name" value="CATABOLIC 3-DEHYDROQUINASE"/>
    <property type="match status" value="1"/>
</dbReference>
<dbReference type="PANTHER" id="PTHR21272:SF3">
    <property type="entry name" value="CATABOLIC 3-DEHYDROQUINASE"/>
    <property type="match status" value="1"/>
</dbReference>
<dbReference type="Pfam" id="PF01220">
    <property type="entry name" value="DHquinase_II"/>
    <property type="match status" value="1"/>
</dbReference>
<dbReference type="PIRSF" id="PIRSF001399">
    <property type="entry name" value="DHquinase_II"/>
    <property type="match status" value="1"/>
</dbReference>
<dbReference type="SUPFAM" id="SSF52304">
    <property type="entry name" value="Type II 3-dehydroquinate dehydratase"/>
    <property type="match status" value="1"/>
</dbReference>
<gene>
    <name evidence="1" type="primary">aroQ</name>
    <name type="ordered locus">Cbei_4570</name>
</gene>
<proteinExistence type="inferred from homology"/>
<evidence type="ECO:0000255" key="1">
    <source>
        <dbReference type="HAMAP-Rule" id="MF_00169"/>
    </source>
</evidence>
<keyword id="KW-0028">Amino-acid biosynthesis</keyword>
<keyword id="KW-0057">Aromatic amino acid biosynthesis</keyword>
<keyword id="KW-0456">Lyase</keyword>
<sequence>MKIMVINGPNLNMVGVREKGIYGAKSFEDICEYIKEEGKKRGHEITLFQSNCEGEIIDELQKAYFENYDGIIINPGAYTHYSYAIHDAIKGINIDTVEVHLSNVHAREDFRKKSVTAPACIGQMCGFGEDGYILAIKALELKKMSK</sequence>
<protein>
    <recommendedName>
        <fullName evidence="1">3-dehydroquinate dehydratase</fullName>
        <shortName evidence="1">3-dehydroquinase</shortName>
        <ecNumber evidence="1">4.2.1.10</ecNumber>
    </recommendedName>
    <alternativeName>
        <fullName evidence="1">Type II DHQase</fullName>
    </alternativeName>
</protein>
<organism>
    <name type="scientific">Clostridium beijerinckii (strain ATCC 51743 / NCIMB 8052)</name>
    <name type="common">Clostridium acetobutylicum</name>
    <dbReference type="NCBI Taxonomy" id="290402"/>
    <lineage>
        <taxon>Bacteria</taxon>
        <taxon>Bacillati</taxon>
        <taxon>Bacillota</taxon>
        <taxon>Clostridia</taxon>
        <taxon>Eubacteriales</taxon>
        <taxon>Clostridiaceae</taxon>
        <taxon>Clostridium</taxon>
    </lineage>
</organism>
<comment type="function">
    <text evidence="1">Catalyzes a trans-dehydration via an enolate intermediate.</text>
</comment>
<comment type="catalytic activity">
    <reaction evidence="1">
        <text>3-dehydroquinate = 3-dehydroshikimate + H2O</text>
        <dbReference type="Rhea" id="RHEA:21096"/>
        <dbReference type="ChEBI" id="CHEBI:15377"/>
        <dbReference type="ChEBI" id="CHEBI:16630"/>
        <dbReference type="ChEBI" id="CHEBI:32364"/>
        <dbReference type="EC" id="4.2.1.10"/>
    </reaction>
</comment>
<comment type="pathway">
    <text evidence="1">Metabolic intermediate biosynthesis; chorismate biosynthesis; chorismate from D-erythrose 4-phosphate and phosphoenolpyruvate: step 3/7.</text>
</comment>
<comment type="subunit">
    <text evidence="1">Homododecamer.</text>
</comment>
<comment type="similarity">
    <text evidence="1">Belongs to the type-II 3-dehydroquinase family.</text>
</comment>
<name>AROQ_CLOB8</name>
<feature type="chain" id="PRO_1000077032" description="3-dehydroquinate dehydratase">
    <location>
        <begin position="1"/>
        <end position="146"/>
    </location>
</feature>
<feature type="active site" description="Proton acceptor" evidence="1">
    <location>
        <position position="22"/>
    </location>
</feature>
<feature type="active site" description="Proton donor" evidence="1">
    <location>
        <position position="100"/>
    </location>
</feature>
<feature type="binding site" evidence="1">
    <location>
        <position position="74"/>
    </location>
    <ligand>
        <name>substrate</name>
    </ligand>
</feature>
<feature type="binding site" evidence="1">
    <location>
        <position position="80"/>
    </location>
    <ligand>
        <name>substrate</name>
    </ligand>
</feature>
<feature type="binding site" evidence="1">
    <location>
        <position position="87"/>
    </location>
    <ligand>
        <name>substrate</name>
    </ligand>
</feature>
<feature type="binding site" evidence="1">
    <location>
        <begin position="101"/>
        <end position="102"/>
    </location>
    <ligand>
        <name>substrate</name>
    </ligand>
</feature>
<feature type="binding site" evidence="1">
    <location>
        <position position="111"/>
    </location>
    <ligand>
        <name>substrate</name>
    </ligand>
</feature>
<feature type="site" description="Transition state stabilizer" evidence="1">
    <location>
        <position position="17"/>
    </location>
</feature>